<protein>
    <recommendedName>
        <fullName>G protein-coupled receptor kinase 2</fullName>
        <ecNumber>2.7.11.16</ecNumber>
    </recommendedName>
</protein>
<comment type="function">
    <text evidence="2 8 9 11 12 13 14">Specifically phosphorylates the activated forms of G protein-coupled receptors (By similarity). Required in adult sensory neurons for chemotaxis (PubMed:15157420). Plays a role in the ASH sensory neurons in the chemotaxis response to NaCl where it is likely to modulate the strength of the NaCl avoidance response which occurs at high NaCl concentrations (PubMed:16407969). Required in the HSN motor neurons for normal egg laying by promoting phosphorylation of amine oxidase amx-2 which inhibits amx-2 activity, preventing metabolism of serotonin (PubMed:28213524). Acts in head acetylcholine neurons to positively regulate locomotion (PubMed:28968387). Inactivates dopamine receptor dop-3 which leads to inactivation of guanine nucleotide-binding protein G(o) subunit goa-1 and activation of the unc-77/nca-1 and nca-2 ion channel proteins (PubMed:28968387). Acts as a positive regulator of swimming by inactivating two dopamine receptors, dop-3 in the premotor interneurons that negatively controls early swimming through the nca ion channel, and dop-1 in the RIS neuron that inhibits late-stage swimming via the signaling of FMRFamide-like neuropeptide flp-11 (PubMed:33796839). Controls movement quiescence by negatively regulating multiple targets including egl-4 in ciliated neurons, the level of ligands of the neuropeptide receptor npr-1 in RMG neurons, and the secretion of flp-1 from AVK interneurons (PubMed:36652499).</text>
</comment>
<comment type="catalytic activity">
    <reaction>
        <text>[G-protein-coupled receptor] + ATP = [G-protein-coupled receptor]-phosphate + ADP + H(+)</text>
        <dbReference type="Rhea" id="RHEA:12008"/>
        <dbReference type="Rhea" id="RHEA-COMP:11260"/>
        <dbReference type="Rhea" id="RHEA-COMP:11261"/>
        <dbReference type="ChEBI" id="CHEBI:15378"/>
        <dbReference type="ChEBI" id="CHEBI:30616"/>
        <dbReference type="ChEBI" id="CHEBI:43176"/>
        <dbReference type="ChEBI" id="CHEBI:68546"/>
        <dbReference type="ChEBI" id="CHEBI:456216"/>
        <dbReference type="EC" id="2.7.11.16"/>
    </reaction>
</comment>
<comment type="subunit">
    <text evidence="11">Interacts with amx-2; the interaction promotes phosphorylation of amx-2.</text>
</comment>
<comment type="tissue specificity">
    <text evidence="8 11 12 13 14">Expressed in many neurons in the adult including the ASH neurons and other sensory neurons, many interneurons, and motor neurons of the ventral nerve cord (PubMed:15157420). Expressed broadly in head neurons and is detected in several head acetylcholine neurons including the AVA, AVB, AVD and AVE premotor interneurons, the SMD and RMD head motor neurons, and the AIN, AIY, SIA, SIB and SAA interneurons (PubMed:28968387). Expressed in HSN motor neurons and VC4/VC5 motor neurons (PubMed:28213524). Also expressed in vulval muscle cells (PubMed:15157420, PubMed:28213524). Expressed in premotor and RIS interneurons (PubMed:33796839). Expressed in ciliated neurons such as AWA, AWB, AWC, ASH and ADF olfactory and nociceptive neurons, and in chemosensory ASH neurons (PubMed:36652499). Expressed in RMG neurons and AVK interneurons (PubMed:36652499).</text>
</comment>
<comment type="developmental stage">
    <text evidence="8">Expression is observed in embryos as early as the 20-30 cell stage and persists throughout development and into adulthood.</text>
</comment>
<comment type="domain">
    <text evidence="10">The kinase domain is required for chemotaxis activity.</text>
</comment>
<comment type="disruption phenotype">
    <text evidence="11 12 13 14">Defective egg-laying with mutants retaining 35 eggs compared to 13-14 eggs in wild-type worms (PubMed:28213524, PubMed:28968387). Reduced serotonin levels, increased levels of the serotonin metabolite 5-hydroxyindoleacetic acid, increased levels of amine oxidase amx-2 in early adult stages and reduced levels of phosphorylated amx-2 (PubMed:28213524). Defective locomotion and reduced body length (PubMed:28968387). Exhibits dwelling behavior with decreased exploration in the presence and absence of food (PubMed:28968387, PubMed:36652499). Exhibits severe swimming defects with reduced body bend frequency in both early- and late-stage swimming (PubMed:33796839).</text>
</comment>
<comment type="similarity">
    <text evidence="15">Belongs to the protein kinase superfamily. AGC Ser/Thr protein kinase family. GPRK subfamily.</text>
</comment>
<dbReference type="EC" id="2.7.11.16"/>
<dbReference type="EMBL" id="FO080476">
    <property type="protein sequence ID" value="CCD63981.1"/>
    <property type="molecule type" value="Genomic_DNA"/>
</dbReference>
<dbReference type="PIR" id="T26096">
    <property type="entry name" value="T26096"/>
</dbReference>
<dbReference type="RefSeq" id="NP_497235.2">
    <property type="nucleotide sequence ID" value="NM_064834.4"/>
</dbReference>
<dbReference type="SMR" id="Q09639"/>
<dbReference type="BioGRID" id="40494">
    <property type="interactions" value="3"/>
</dbReference>
<dbReference type="FunCoup" id="Q09639">
    <property type="interactions" value="1314"/>
</dbReference>
<dbReference type="IntAct" id="Q09639">
    <property type="interactions" value="2"/>
</dbReference>
<dbReference type="MINT" id="Q09639"/>
<dbReference type="STRING" id="6239.W02B3.2.1"/>
<dbReference type="PaxDb" id="6239-W02B3.2"/>
<dbReference type="PeptideAtlas" id="Q09639"/>
<dbReference type="EnsemblMetazoa" id="W02B3.2.1">
    <property type="protein sequence ID" value="W02B3.2.1"/>
    <property type="gene ID" value="WBGene00001709"/>
</dbReference>
<dbReference type="GeneID" id="175223"/>
<dbReference type="KEGG" id="cel:CELE_W02B3.2"/>
<dbReference type="UCSC" id="W02B3.2">
    <property type="organism name" value="c. elegans"/>
</dbReference>
<dbReference type="AGR" id="WB:WBGene00001709"/>
<dbReference type="CTD" id="175223"/>
<dbReference type="WormBase" id="W02B3.2">
    <property type="protein sequence ID" value="CE32946"/>
    <property type="gene ID" value="WBGene00001709"/>
    <property type="gene designation" value="grk-2"/>
</dbReference>
<dbReference type="eggNOG" id="KOG0986">
    <property type="taxonomic scope" value="Eukaryota"/>
</dbReference>
<dbReference type="GeneTree" id="ENSGT00940000169024"/>
<dbReference type="HOGENOM" id="CLU_000288_63_41_1"/>
<dbReference type="InParanoid" id="Q09639"/>
<dbReference type="OMA" id="LHTHTHD"/>
<dbReference type="OrthoDB" id="354826at2759"/>
<dbReference type="PhylomeDB" id="Q09639"/>
<dbReference type="Reactome" id="R-CEL-111933">
    <property type="pathway name" value="Calmodulin induced events"/>
</dbReference>
<dbReference type="Reactome" id="R-CEL-416476">
    <property type="pathway name" value="G alpha (q) signalling events"/>
</dbReference>
<dbReference type="PRO" id="PR:Q09639"/>
<dbReference type="Proteomes" id="UP000001940">
    <property type="component" value="Chromosome III"/>
</dbReference>
<dbReference type="GO" id="GO:0005524">
    <property type="term" value="F:ATP binding"/>
    <property type="evidence" value="ECO:0007669"/>
    <property type="project" value="UniProtKB-KW"/>
</dbReference>
<dbReference type="GO" id="GO:0001664">
    <property type="term" value="F:G protein-coupled receptor binding"/>
    <property type="evidence" value="ECO:0000318"/>
    <property type="project" value="GO_Central"/>
</dbReference>
<dbReference type="GO" id="GO:0004703">
    <property type="term" value="F:G protein-coupled receptor kinase activity"/>
    <property type="evidence" value="ECO:0000318"/>
    <property type="project" value="GO_Central"/>
</dbReference>
<dbReference type="GO" id="GO:0006935">
    <property type="term" value="P:chemotaxis"/>
    <property type="evidence" value="ECO:0000315"/>
    <property type="project" value="WormBase"/>
</dbReference>
<dbReference type="GO" id="GO:0007186">
    <property type="term" value="P:G protein-coupled receptor signaling pathway"/>
    <property type="evidence" value="ECO:0000318"/>
    <property type="project" value="GO_Central"/>
</dbReference>
<dbReference type="GO" id="GO:0006972">
    <property type="term" value="P:hyperosmotic response"/>
    <property type="evidence" value="ECO:0000315"/>
    <property type="project" value="WormBase"/>
</dbReference>
<dbReference type="GO" id="GO:0060160">
    <property type="term" value="P:negative regulation of dopamine receptor signaling pathway"/>
    <property type="evidence" value="ECO:0000315"/>
    <property type="project" value="UniProtKB"/>
</dbReference>
<dbReference type="GO" id="GO:0042048">
    <property type="term" value="P:olfactory behavior"/>
    <property type="evidence" value="ECO:0000315"/>
    <property type="project" value="WormBase"/>
</dbReference>
<dbReference type="GO" id="GO:2001259">
    <property type="term" value="P:positive regulation of cation channel activity"/>
    <property type="evidence" value="ECO:0000315"/>
    <property type="project" value="UniProtKB"/>
</dbReference>
<dbReference type="GO" id="GO:0050921">
    <property type="term" value="P:positive regulation of chemotaxis"/>
    <property type="evidence" value="ECO:0000315"/>
    <property type="project" value="UniProtKB"/>
</dbReference>
<dbReference type="GO" id="GO:1901046">
    <property type="term" value="P:positive regulation of egg-laying behavior"/>
    <property type="evidence" value="ECO:0000315"/>
    <property type="project" value="UniProtKB"/>
</dbReference>
<dbReference type="GO" id="GO:0040010">
    <property type="term" value="P:positive regulation of growth rate"/>
    <property type="evidence" value="ECO:0000316"/>
    <property type="project" value="WormBase"/>
</dbReference>
<dbReference type="GO" id="GO:0040017">
    <property type="term" value="P:positive regulation of locomotion"/>
    <property type="evidence" value="ECO:0000315"/>
    <property type="project" value="UniProtKB"/>
</dbReference>
<dbReference type="GO" id="GO:0006468">
    <property type="term" value="P:protein phosphorylation"/>
    <property type="evidence" value="ECO:0000315"/>
    <property type="project" value="UniProtKB"/>
</dbReference>
<dbReference type="GO" id="GO:0009966">
    <property type="term" value="P:regulation of signal transduction"/>
    <property type="evidence" value="ECO:0000318"/>
    <property type="project" value="GO_Central"/>
</dbReference>
<dbReference type="GO" id="GO:1902074">
    <property type="term" value="P:response to salt"/>
    <property type="evidence" value="ECO:0000315"/>
    <property type="project" value="UniProtKB"/>
</dbReference>
<dbReference type="GO" id="GO:0042429">
    <property type="term" value="P:serotonin catabolic process"/>
    <property type="evidence" value="ECO:0000315"/>
    <property type="project" value="UniProtKB"/>
</dbReference>
<dbReference type="CDD" id="cd01240">
    <property type="entry name" value="PH_GRK2_subgroup"/>
    <property type="match status" value="1"/>
</dbReference>
<dbReference type="CDD" id="cd08747">
    <property type="entry name" value="RGS_GRK2_GRK3"/>
    <property type="match status" value="1"/>
</dbReference>
<dbReference type="CDD" id="cd05606">
    <property type="entry name" value="STKc_beta_ARK"/>
    <property type="match status" value="1"/>
</dbReference>
<dbReference type="FunFam" id="1.10.510.10:FF:000118">
    <property type="entry name" value="G protein-coupled receptor kinase"/>
    <property type="match status" value="1"/>
</dbReference>
<dbReference type="FunFam" id="2.30.29.30:FF:000084">
    <property type="entry name" value="G protein-coupled receptor kinase"/>
    <property type="match status" value="1"/>
</dbReference>
<dbReference type="FunFam" id="3.30.200.20:FF:000068">
    <property type="entry name" value="G protein-coupled receptor kinase"/>
    <property type="match status" value="1"/>
</dbReference>
<dbReference type="Gene3D" id="3.30.200.20">
    <property type="entry name" value="Phosphorylase Kinase, domain 1"/>
    <property type="match status" value="1"/>
</dbReference>
<dbReference type="Gene3D" id="2.30.29.30">
    <property type="entry name" value="Pleckstrin-homology domain (PH domain)/Phosphotyrosine-binding domain (PTB)"/>
    <property type="match status" value="1"/>
</dbReference>
<dbReference type="Gene3D" id="1.10.167.10">
    <property type="entry name" value="Regulator of G-protein Signalling 4, domain 2"/>
    <property type="match status" value="1"/>
</dbReference>
<dbReference type="Gene3D" id="1.10.510.10">
    <property type="entry name" value="Transferase(Phosphotransferase) domain 1"/>
    <property type="match status" value="1"/>
</dbReference>
<dbReference type="InterPro" id="IPR000961">
    <property type="entry name" value="AGC-kinase_C"/>
</dbReference>
<dbReference type="InterPro" id="IPR000239">
    <property type="entry name" value="GPCR_kinase"/>
</dbReference>
<dbReference type="InterPro" id="IPR011009">
    <property type="entry name" value="Kinase-like_dom_sf"/>
</dbReference>
<dbReference type="InterPro" id="IPR011993">
    <property type="entry name" value="PH-like_dom_sf"/>
</dbReference>
<dbReference type="InterPro" id="IPR001849">
    <property type="entry name" value="PH_domain"/>
</dbReference>
<dbReference type="InterPro" id="IPR000719">
    <property type="entry name" value="Prot_kinase_dom"/>
</dbReference>
<dbReference type="InterPro" id="IPR017441">
    <property type="entry name" value="Protein_kinase_ATP_BS"/>
</dbReference>
<dbReference type="InterPro" id="IPR016137">
    <property type="entry name" value="RGS"/>
</dbReference>
<dbReference type="InterPro" id="IPR036305">
    <property type="entry name" value="RGS_sf"/>
</dbReference>
<dbReference type="InterPro" id="IPR044926">
    <property type="entry name" value="RGS_subdomain_2"/>
</dbReference>
<dbReference type="InterPro" id="IPR008271">
    <property type="entry name" value="Ser/Thr_kinase_AS"/>
</dbReference>
<dbReference type="PANTHER" id="PTHR24355:SF18">
    <property type="entry name" value="G PROTEIN-COUPLED RECEPTOR KINASE"/>
    <property type="match status" value="1"/>
</dbReference>
<dbReference type="PANTHER" id="PTHR24355">
    <property type="entry name" value="G PROTEIN-COUPLED RECEPTOR KINASE/RIBOSOMAL PROTEIN S6 KINASE"/>
    <property type="match status" value="1"/>
</dbReference>
<dbReference type="Pfam" id="PF00069">
    <property type="entry name" value="Pkinase"/>
    <property type="match status" value="1"/>
</dbReference>
<dbReference type="Pfam" id="PF00615">
    <property type="entry name" value="RGS"/>
    <property type="match status" value="1"/>
</dbReference>
<dbReference type="PRINTS" id="PR00717">
    <property type="entry name" value="GPCRKINASE"/>
</dbReference>
<dbReference type="SMART" id="SM00233">
    <property type="entry name" value="PH"/>
    <property type="match status" value="1"/>
</dbReference>
<dbReference type="SMART" id="SM00315">
    <property type="entry name" value="RGS"/>
    <property type="match status" value="1"/>
</dbReference>
<dbReference type="SMART" id="SM00133">
    <property type="entry name" value="S_TK_X"/>
    <property type="match status" value="1"/>
</dbReference>
<dbReference type="SMART" id="SM00220">
    <property type="entry name" value="S_TKc"/>
    <property type="match status" value="1"/>
</dbReference>
<dbReference type="SUPFAM" id="SSF50729">
    <property type="entry name" value="PH domain-like"/>
    <property type="match status" value="1"/>
</dbReference>
<dbReference type="SUPFAM" id="SSF56112">
    <property type="entry name" value="Protein kinase-like (PK-like)"/>
    <property type="match status" value="1"/>
</dbReference>
<dbReference type="SUPFAM" id="SSF48097">
    <property type="entry name" value="Regulator of G-protein signaling, RGS"/>
    <property type="match status" value="1"/>
</dbReference>
<dbReference type="PROSITE" id="PS51285">
    <property type="entry name" value="AGC_KINASE_CTER"/>
    <property type="match status" value="1"/>
</dbReference>
<dbReference type="PROSITE" id="PS50003">
    <property type="entry name" value="PH_DOMAIN"/>
    <property type="match status" value="1"/>
</dbReference>
<dbReference type="PROSITE" id="PS00107">
    <property type="entry name" value="PROTEIN_KINASE_ATP"/>
    <property type="match status" value="1"/>
</dbReference>
<dbReference type="PROSITE" id="PS50011">
    <property type="entry name" value="PROTEIN_KINASE_DOM"/>
    <property type="match status" value="1"/>
</dbReference>
<dbReference type="PROSITE" id="PS00108">
    <property type="entry name" value="PROTEIN_KINASE_ST"/>
    <property type="match status" value="1"/>
</dbReference>
<dbReference type="PROSITE" id="PS50132">
    <property type="entry name" value="RGS"/>
    <property type="match status" value="1"/>
</dbReference>
<keyword id="KW-0067">ATP-binding</keyword>
<keyword id="KW-0145">Chemotaxis</keyword>
<keyword id="KW-0418">Kinase</keyword>
<keyword id="KW-0547">Nucleotide-binding</keyword>
<keyword id="KW-0597">Phosphoprotein</keyword>
<keyword id="KW-1185">Reference proteome</keyword>
<keyword id="KW-0723">Serine/threonine-protein kinase</keyword>
<keyword id="KW-0808">Transferase</keyword>
<proteinExistence type="evidence at protein level"/>
<sequence>MADLEAVLADVSYLMAMEKSRSQPAARASKRIVLPDPSVRSIMQKFLEKSGDMKFDKIFNQKLGFLLLKDYAENVSESPCPQIKFYEAIKEYEKMETPDERLTKAREIYDHHIMVEMLAHAHNYSKESLQHVQYHLLKQNVPPDLFHRYVLEICDQLRGDIFQRFLESDKFTRFCQWKNLELNMQLTMNDFSVHRIIGRGGFGEVYGCRKADTGKMYAMKCLDKKRIKMKQGETLALNERIMLSLVSTGQDCPFIVCMTYAFQSPDKLCFILDLMNGGDLHYHLSQHGVFTEQEMIFYASEVILGLEHMHNRFVVYRDLKPANILLDENGHVRVSDLGLACDYSKKKPHASVGTHGYMAPEVLAKGVAYDSSADWFSLGCMLYKLLKGHSPFRQHKSKDKNEIDKMTLTQDIELPNEGLSKDCRDLLEGLLKRDVPDRLGCRGKGPTEVKEHPFFKDVDWQTVYLRRMTPPLIPPRGEVNAADAFDIGNFDDDEVKGVKLQDGDSDLYKNFNIVISERWQNEIAETIFEVVNQDADKAESKKRSKQKIKVAVEEKDSDVIVHGYIKKLGGPFTSAWQTKYGKLYPSRLELYPESLTAKPELVFMDQIEDVCAEMQTIKGETAIIVKLRDGFKEPKICLTNSDEISLKEWHTSLRTAHKVSQELLQRMGRKAIKIYGVNHDPMLSESERPGSVTRAFLNRASSVDSGV</sequence>
<accession>Q09639</accession>
<name>GRK2_CAEEL</name>
<feature type="chain" id="PRO_0000086841" description="G protein-coupled receptor kinase 2">
    <location>
        <begin position="1"/>
        <end position="707"/>
    </location>
</feature>
<feature type="domain" description="RGS" evidence="5">
    <location>
        <begin position="54"/>
        <end position="175"/>
    </location>
</feature>
<feature type="domain" description="Protein kinase" evidence="4">
    <location>
        <begin position="191"/>
        <end position="455"/>
    </location>
</feature>
<feature type="domain" description="AGC-kinase C-terminal" evidence="6">
    <location>
        <begin position="456"/>
        <end position="523"/>
    </location>
</feature>
<feature type="domain" description="PH" evidence="3">
    <location>
        <begin position="558"/>
        <end position="658"/>
    </location>
</feature>
<feature type="region of interest" description="N-terminal">
    <location>
        <begin position="1"/>
        <end position="190"/>
    </location>
</feature>
<feature type="active site" description="Proton acceptor" evidence="4 7">
    <location>
        <position position="318"/>
    </location>
</feature>
<feature type="binding site" evidence="4">
    <location>
        <begin position="197"/>
        <end position="205"/>
    </location>
    <ligand>
        <name>ATP</name>
        <dbReference type="ChEBI" id="CHEBI:30616"/>
    </ligand>
</feature>
<feature type="binding site" evidence="4">
    <location>
        <position position="220"/>
    </location>
    <ligand>
        <name>ATP</name>
        <dbReference type="ChEBI" id="CHEBI:30616"/>
    </ligand>
</feature>
<feature type="site" description="Required for receptor phosphorylation" evidence="1">
    <location>
        <position position="3"/>
    </location>
</feature>
<feature type="site" description="Required for receptor phosphorylation" evidence="1">
    <location>
        <position position="4"/>
    </location>
</feature>
<feature type="site" description="Required for receptor phosphorylation" evidence="1">
    <location>
        <position position="10"/>
    </location>
</feature>
<feature type="mutagenesis site" description="Failure to restore locomotion or avoidance to the aversive compounds octanol and quinine in animals lacking endogenous grk-2." evidence="10 12">
    <original>D</original>
    <variation>K</variation>
    <location>
        <position position="3"/>
    </location>
</feature>
<feature type="mutagenesis site" description="Failure to restore locomotion or avoidance to the aversive compounds octanol and quinine in animals lacking endogenous grk-2." evidence="10 12">
    <original>L</original>
    <variation>K</variation>
    <location>
        <position position="4"/>
    </location>
</feature>
<feature type="mutagenesis site" description="Failure to restore locomotion or avoidance to the aversive compounds octanol and quinine in animals lacking endogenous grk-2." evidence="10 12">
    <original>VL</original>
    <variation>AA</variation>
    <location>
        <begin position="7"/>
        <end position="8"/>
    </location>
</feature>
<feature type="mutagenesis site" description="Failure to restore locomotion or avoidance to the aversive compounds octanol and quinine in animals lacking endogenous grk-2." evidence="10 12">
    <original>D</original>
    <variation>A</variation>
    <location>
        <position position="10"/>
    </location>
</feature>
<feature type="mutagenesis site" description="No effect on ability to restore locomotion or avoidance to the aversive compounds octanol and quinine in animals lacking endogenous grk-2." evidence="10 12">
    <original>R</original>
    <variation>A</variation>
    <location>
        <position position="106"/>
    </location>
</feature>
<feature type="mutagenesis site" description="No effect on ability to restore locomotion or avoidance to the aversive compounds octanol and quinine in animals lacking endogenous grk-2." evidence="10 12">
    <original>Y</original>
    <variation>I</variation>
    <location>
        <position position="109"/>
    </location>
</feature>
<feature type="mutagenesis site" description="No effect on ability to restore locomotion or avoidance to the aversive compounds octanol and quinine in animals lacking endogenous grk-2." evidence="10 12">
    <original>D</original>
    <variation>A</variation>
    <location>
        <position position="110"/>
    </location>
</feature>
<feature type="mutagenesis site" description="Failure to restore locomotion or avoidance to the aversive compounds octanol and quinine in animals lacking endogenous grk-2." evidence="10 12">
    <original>R</original>
    <variation>A</variation>
    <location>
        <position position="195"/>
    </location>
</feature>
<feature type="mutagenesis site" description="Failure to restore avoidance to the aversive compounds octanol and quinine in animals lacking endogenous grk-2. Failure to rescue defective egg laying and locomotion in grk-2 mutants." evidence="10 11 12">
    <original>K</original>
    <variation>R</variation>
    <location>
        <position position="220"/>
    </location>
</feature>
<feature type="mutagenesis site" description="In rt97; dramatic decrease in grk-2 protein levels, defective egg laying, reduced serotonin levels, increased levels of the serotonin metabolite 5-hydroxyindoleacetic acid, increased levels of amine oxidase amx-2 in early adult stages, reduced levels of phosphorylated amx-2, severe defect in octanol avoidance and severely impaired chemotaxis to attractive compounds including 0.1-100 mM NaCl although mutants show avoidance to 25 mM NaCl after pre-exposure to 100 mM NaCl." evidence="8 9 11">
    <original>T</original>
    <variation>I</variation>
    <location>
        <position position="354"/>
    </location>
</feature>
<feature type="mutagenesis site" description="In yak18; decreased body length, slow locomotion and defective egg laying." evidence="12">
    <original>G</original>
    <variation>E</variation>
    <location>
        <position position="379"/>
    </location>
</feature>
<feature type="mutagenesis site" description="Failure to restore locomotion in animals lacking endogenous grk-2. Significantly restored avoidance of aversive compounds octanol and quinine in animals lacking endogenous grk-2. Failure to restore avoidance to octanol and quinine in animals lacking endogenous grk-2; when associated with Q-587." evidence="10 12">
    <original>K</original>
    <variation>E</variation>
    <location>
        <position position="567"/>
    </location>
</feature>
<feature type="mutagenesis site" description="Failure to restore locomotion in animals lacking endogenous grk-2. Reduced ability to restore avoidance to the aversive compounds octanol and quinine in animals lacking endogenous grk-2. Failure to restore avoidance to octanol and quinine in animals lacking endogenous grk-2; when associated with E-567." evidence="10 12">
    <original>R</original>
    <variation>Q</variation>
    <location>
        <position position="587"/>
    </location>
</feature>
<evidence type="ECO:0000250" key="1">
    <source>
        <dbReference type="UniProtKB" id="P25098"/>
    </source>
</evidence>
<evidence type="ECO:0000250" key="2">
    <source>
        <dbReference type="UniProtKB" id="P32298"/>
    </source>
</evidence>
<evidence type="ECO:0000255" key="3">
    <source>
        <dbReference type="PROSITE-ProRule" id="PRU00145"/>
    </source>
</evidence>
<evidence type="ECO:0000255" key="4">
    <source>
        <dbReference type="PROSITE-ProRule" id="PRU00159"/>
    </source>
</evidence>
<evidence type="ECO:0000255" key="5">
    <source>
        <dbReference type="PROSITE-ProRule" id="PRU00171"/>
    </source>
</evidence>
<evidence type="ECO:0000255" key="6">
    <source>
        <dbReference type="PROSITE-ProRule" id="PRU00618"/>
    </source>
</evidence>
<evidence type="ECO:0000255" key="7">
    <source>
        <dbReference type="PROSITE-ProRule" id="PRU10027"/>
    </source>
</evidence>
<evidence type="ECO:0000269" key="8">
    <source>
    </source>
</evidence>
<evidence type="ECO:0000269" key="9">
    <source>
    </source>
</evidence>
<evidence type="ECO:0000269" key="10">
    <source>
    </source>
</evidence>
<evidence type="ECO:0000269" key="11">
    <source>
    </source>
</evidence>
<evidence type="ECO:0000269" key="12">
    <source>
    </source>
</evidence>
<evidence type="ECO:0000269" key="13">
    <source>
    </source>
</evidence>
<evidence type="ECO:0000269" key="14">
    <source>
    </source>
</evidence>
<evidence type="ECO:0000305" key="15"/>
<organism>
    <name type="scientific">Caenorhabditis elegans</name>
    <dbReference type="NCBI Taxonomy" id="6239"/>
    <lineage>
        <taxon>Eukaryota</taxon>
        <taxon>Metazoa</taxon>
        <taxon>Ecdysozoa</taxon>
        <taxon>Nematoda</taxon>
        <taxon>Chromadorea</taxon>
        <taxon>Rhabditida</taxon>
        <taxon>Rhabditina</taxon>
        <taxon>Rhabditomorpha</taxon>
        <taxon>Rhabditoidea</taxon>
        <taxon>Rhabditidae</taxon>
        <taxon>Peloderinae</taxon>
        <taxon>Caenorhabditis</taxon>
    </lineage>
</organism>
<gene>
    <name type="primary">grk-2</name>
    <name type="ORF">W02B3.2</name>
</gene>
<reference key="1">
    <citation type="journal article" date="1998" name="Science">
        <title>Genome sequence of the nematode C. elegans: a platform for investigating biology.</title>
        <authorList>
            <consortium name="The C. elegans sequencing consortium"/>
        </authorList>
    </citation>
    <scope>NUCLEOTIDE SEQUENCE [LARGE SCALE GENOMIC DNA]</scope>
    <source>
        <strain>Bristol N2</strain>
    </source>
</reference>
<reference key="2">
    <citation type="journal article" date="2004" name="Neuron">
        <title>G protein-coupled receptor kinase function is essential for chemosensation in C. elegans.</title>
        <authorList>
            <person name="Fukuto H.S."/>
            <person name="Ferkey D.M."/>
            <person name="Apicella A.J."/>
            <person name="Lans H."/>
            <person name="Sharmeen T."/>
            <person name="Chen W."/>
            <person name="Lefkowitz R.J."/>
            <person name="Jansen G."/>
            <person name="Schafer W.R."/>
            <person name="Hart A.C."/>
        </authorList>
    </citation>
    <scope>FUNCTION</scope>
    <scope>TISSUE SPECIFICITY</scope>
    <scope>DEVELOPMENTAL STAGE</scope>
    <scope>MUTAGENESIS OF THR-354</scope>
</reference>
<reference key="3">
    <citation type="journal article" date="2006" name="EMBO J.">
        <title>Antagonistic sensory cues generate gustatory plasticity in Caenorhabditis elegans.</title>
        <authorList>
            <person name="Hukema R.K."/>
            <person name="Rademakers S."/>
            <person name="Dekkers M.P."/>
            <person name="Burghoorn J."/>
            <person name="Jansen G."/>
        </authorList>
    </citation>
    <scope>FUNCTION</scope>
    <scope>MUTAGENESIS OF THR-354</scope>
</reference>
<reference key="4">
    <citation type="journal article" date="2012" name="J. Biol. Chem.">
        <title>Structural domains required for Caenorhabditis elegans G protein-coupled receptor kinase 2 (GRK-2) function in vivo.</title>
        <authorList>
            <person name="Wood J.F."/>
            <person name="Wang J."/>
            <person name="Benovic J.L."/>
            <person name="Ferkey D.M."/>
        </authorList>
    </citation>
    <scope>DOMAIN</scope>
    <scope>MUTAGENESIS OF ASP-3; LEU-4; 7-VAL-LEU-8; ASP-10; ARG-106; TYR-109; ASP-110; ARG-195; LYS-220; LYS-567 AND ARG-587</scope>
</reference>
<reference key="5">
    <citation type="journal article" date="2017" name="J. Biol. Chem.">
        <title>G protein-coupled receptor kinase-2 (GRK-2) regulates serotonin metabolism through the monoamine oxidase AMX-2 in Caenorhabditis elegans.</title>
        <authorList>
            <person name="Wang J."/>
            <person name="Luo J."/>
            <person name="Aryal D.K."/>
            <person name="Wetsel W.C."/>
            <person name="Nass R."/>
            <person name="Benovic J.L."/>
        </authorList>
    </citation>
    <scope>FUNCTION</scope>
    <scope>INTERACTION WITH AMX-2</scope>
    <scope>TISSUE SPECIFICITY</scope>
    <scope>DISRUPTION PHENOTYPE</scope>
    <scope>MUTAGENESIS OF LYS-220 AND THR-354</scope>
</reference>
<reference key="6">
    <citation type="journal article" date="2017" name="PLoS Genet.">
        <title>Dopamine negatively modulates the NCA ion channels in C. elegans.</title>
        <authorList>
            <person name="Topalidou I."/>
            <person name="Cooper K."/>
            <person name="Pereira L."/>
            <person name="Ailion M."/>
        </authorList>
    </citation>
    <scope>FUNCTION</scope>
    <scope>TISSUE SPECIFICITY</scope>
    <scope>DISRUPTION PHENOTYPE</scope>
    <scope>MUTAGENESIS OF ASP-3; LEU-4; 7-VAL-LEU-8; ASP-10; ARG-106; TYR-109; ASP-110; ARG-195; GLY-379; LYS-567 AND ARG-587</scope>
</reference>
<reference evidence="15" key="7">
    <citation type="journal article" date="2021" name="IScience">
        <title>Dopamine receptor DOP-1 engages a sleep pathway to modulate swimming in C. elegans.</title>
        <authorList>
            <person name="Xu Y."/>
            <person name="Zhang L."/>
            <person name="Liu Y."/>
            <person name="Topalidou I."/>
            <person name="Hassinan C."/>
            <person name="Ailion M."/>
            <person name="Zhao Z."/>
            <person name="Wang T."/>
            <person name="Chen Z."/>
            <person name="Bai J."/>
        </authorList>
    </citation>
    <scope>FUNCTION</scope>
    <scope>TISSUE SPECIFICITY</scope>
    <scope>DISRUPTION PHENOTYPE</scope>
</reference>
<reference evidence="15" key="8">
    <citation type="journal article" date="2023" name="PLoS Genet.">
        <title>G protein-coupled receptor kinase-2 (GRK-2) controls exploration through neuropeptide signaling in Caenorhabditis elegans.</title>
        <authorList>
            <person name="Davis K."/>
            <person name="Mitchell C."/>
            <person name="Weissenfels O."/>
            <person name="Bai J."/>
            <person name="Raizen D.M."/>
            <person name="Ailion M."/>
            <person name="Topalidou I."/>
        </authorList>
    </citation>
    <scope>FUNCTION</scope>
    <scope>TISSUE SPECIFICITY</scope>
    <scope>DISRUPTION PHENOTYPE</scope>
</reference>